<evidence type="ECO:0000255" key="1">
    <source>
        <dbReference type="HAMAP-Rule" id="MF_00402"/>
    </source>
</evidence>
<evidence type="ECO:0000305" key="2"/>
<gene>
    <name evidence="1" type="primary">rplS</name>
    <name type="ordered locus">Shal_1100</name>
</gene>
<feature type="chain" id="PRO_1000080372" description="Large ribosomal subunit protein bL19">
    <location>
        <begin position="1"/>
        <end position="117"/>
    </location>
</feature>
<accession>B0TJ78</accession>
<keyword id="KW-0687">Ribonucleoprotein</keyword>
<keyword id="KW-0689">Ribosomal protein</keyword>
<sequence>MNNIIKMLNEEQMKTDVPQFGAGDTVVVKVRVVEGGKERLQAFEGVVIAKRNRGVHSAFTVRKISNGEGVERAFQTHSPIISSIEVKRRGRVRRAKLYYLRDRSGKSARIREKLATK</sequence>
<comment type="function">
    <text evidence="1">This protein is located at the 30S-50S ribosomal subunit interface and may play a role in the structure and function of the aminoacyl-tRNA binding site.</text>
</comment>
<comment type="similarity">
    <text evidence="1">Belongs to the bacterial ribosomal protein bL19 family.</text>
</comment>
<protein>
    <recommendedName>
        <fullName evidence="1">Large ribosomal subunit protein bL19</fullName>
    </recommendedName>
    <alternativeName>
        <fullName evidence="2">50S ribosomal protein L19</fullName>
    </alternativeName>
</protein>
<proteinExistence type="inferred from homology"/>
<name>RL19_SHEHH</name>
<organism>
    <name type="scientific">Shewanella halifaxensis (strain HAW-EB4)</name>
    <dbReference type="NCBI Taxonomy" id="458817"/>
    <lineage>
        <taxon>Bacteria</taxon>
        <taxon>Pseudomonadati</taxon>
        <taxon>Pseudomonadota</taxon>
        <taxon>Gammaproteobacteria</taxon>
        <taxon>Alteromonadales</taxon>
        <taxon>Shewanellaceae</taxon>
        <taxon>Shewanella</taxon>
    </lineage>
</organism>
<reference key="1">
    <citation type="submission" date="2008-01" db="EMBL/GenBank/DDBJ databases">
        <title>Complete sequence of Shewanella halifaxensis HAW-EB4.</title>
        <authorList>
            <consortium name="US DOE Joint Genome Institute"/>
            <person name="Copeland A."/>
            <person name="Lucas S."/>
            <person name="Lapidus A."/>
            <person name="Glavina del Rio T."/>
            <person name="Dalin E."/>
            <person name="Tice H."/>
            <person name="Bruce D."/>
            <person name="Goodwin L."/>
            <person name="Pitluck S."/>
            <person name="Sims D."/>
            <person name="Brettin T."/>
            <person name="Detter J.C."/>
            <person name="Han C."/>
            <person name="Kuske C.R."/>
            <person name="Schmutz J."/>
            <person name="Larimer F."/>
            <person name="Land M."/>
            <person name="Hauser L."/>
            <person name="Kyrpides N."/>
            <person name="Kim E."/>
            <person name="Zhao J.-S."/>
            <person name="Richardson P."/>
        </authorList>
    </citation>
    <scope>NUCLEOTIDE SEQUENCE [LARGE SCALE GENOMIC DNA]</scope>
    <source>
        <strain>HAW-EB4</strain>
    </source>
</reference>
<dbReference type="EMBL" id="CP000931">
    <property type="protein sequence ID" value="ABZ75669.1"/>
    <property type="molecule type" value="Genomic_DNA"/>
</dbReference>
<dbReference type="RefSeq" id="WP_012276214.1">
    <property type="nucleotide sequence ID" value="NC_010334.1"/>
</dbReference>
<dbReference type="SMR" id="B0TJ78"/>
<dbReference type="STRING" id="458817.Shal_1100"/>
<dbReference type="KEGG" id="shl:Shal_1100"/>
<dbReference type="eggNOG" id="COG0335">
    <property type="taxonomic scope" value="Bacteria"/>
</dbReference>
<dbReference type="HOGENOM" id="CLU_103507_2_2_6"/>
<dbReference type="OrthoDB" id="9803541at2"/>
<dbReference type="Proteomes" id="UP000001317">
    <property type="component" value="Chromosome"/>
</dbReference>
<dbReference type="GO" id="GO:0022625">
    <property type="term" value="C:cytosolic large ribosomal subunit"/>
    <property type="evidence" value="ECO:0007669"/>
    <property type="project" value="TreeGrafter"/>
</dbReference>
<dbReference type="GO" id="GO:0003735">
    <property type="term" value="F:structural constituent of ribosome"/>
    <property type="evidence" value="ECO:0007669"/>
    <property type="project" value="InterPro"/>
</dbReference>
<dbReference type="GO" id="GO:0006412">
    <property type="term" value="P:translation"/>
    <property type="evidence" value="ECO:0007669"/>
    <property type="project" value="UniProtKB-UniRule"/>
</dbReference>
<dbReference type="FunFam" id="2.30.30.790:FF:000001">
    <property type="entry name" value="50S ribosomal protein L19"/>
    <property type="match status" value="1"/>
</dbReference>
<dbReference type="Gene3D" id="2.30.30.790">
    <property type="match status" value="1"/>
</dbReference>
<dbReference type="HAMAP" id="MF_00402">
    <property type="entry name" value="Ribosomal_bL19"/>
    <property type="match status" value="1"/>
</dbReference>
<dbReference type="InterPro" id="IPR001857">
    <property type="entry name" value="Ribosomal_bL19"/>
</dbReference>
<dbReference type="InterPro" id="IPR018257">
    <property type="entry name" value="Ribosomal_bL19_CS"/>
</dbReference>
<dbReference type="InterPro" id="IPR038657">
    <property type="entry name" value="Ribosomal_bL19_sf"/>
</dbReference>
<dbReference type="InterPro" id="IPR008991">
    <property type="entry name" value="Translation_prot_SH3-like_sf"/>
</dbReference>
<dbReference type="NCBIfam" id="TIGR01024">
    <property type="entry name" value="rplS_bact"/>
    <property type="match status" value="1"/>
</dbReference>
<dbReference type="PANTHER" id="PTHR15680:SF9">
    <property type="entry name" value="LARGE RIBOSOMAL SUBUNIT PROTEIN BL19M"/>
    <property type="match status" value="1"/>
</dbReference>
<dbReference type="PANTHER" id="PTHR15680">
    <property type="entry name" value="RIBOSOMAL PROTEIN L19"/>
    <property type="match status" value="1"/>
</dbReference>
<dbReference type="Pfam" id="PF01245">
    <property type="entry name" value="Ribosomal_L19"/>
    <property type="match status" value="1"/>
</dbReference>
<dbReference type="PIRSF" id="PIRSF002191">
    <property type="entry name" value="Ribosomal_L19"/>
    <property type="match status" value="1"/>
</dbReference>
<dbReference type="PRINTS" id="PR00061">
    <property type="entry name" value="RIBOSOMALL19"/>
</dbReference>
<dbReference type="SUPFAM" id="SSF50104">
    <property type="entry name" value="Translation proteins SH3-like domain"/>
    <property type="match status" value="1"/>
</dbReference>
<dbReference type="PROSITE" id="PS01015">
    <property type="entry name" value="RIBOSOMAL_L19"/>
    <property type="match status" value="1"/>
</dbReference>